<dbReference type="EC" id="5.1.1.3" evidence="1"/>
<dbReference type="EMBL" id="CP000829">
    <property type="protein sequence ID" value="ACI60635.1"/>
    <property type="molecule type" value="Genomic_DNA"/>
</dbReference>
<dbReference type="SMR" id="B5XJX3"/>
<dbReference type="KEGG" id="soz:Spy49_0297"/>
<dbReference type="HOGENOM" id="CLU_052344_0_2_9"/>
<dbReference type="UniPathway" id="UPA00219"/>
<dbReference type="Proteomes" id="UP000001039">
    <property type="component" value="Chromosome"/>
</dbReference>
<dbReference type="GO" id="GO:0008881">
    <property type="term" value="F:glutamate racemase activity"/>
    <property type="evidence" value="ECO:0007669"/>
    <property type="project" value="UniProtKB-UniRule"/>
</dbReference>
<dbReference type="GO" id="GO:0071555">
    <property type="term" value="P:cell wall organization"/>
    <property type="evidence" value="ECO:0007669"/>
    <property type="project" value="UniProtKB-KW"/>
</dbReference>
<dbReference type="GO" id="GO:0009252">
    <property type="term" value="P:peptidoglycan biosynthetic process"/>
    <property type="evidence" value="ECO:0007669"/>
    <property type="project" value="UniProtKB-UniRule"/>
</dbReference>
<dbReference type="GO" id="GO:0008360">
    <property type="term" value="P:regulation of cell shape"/>
    <property type="evidence" value="ECO:0007669"/>
    <property type="project" value="UniProtKB-KW"/>
</dbReference>
<dbReference type="FunFam" id="3.40.50.1860:FF:000002">
    <property type="entry name" value="Glutamate racemase"/>
    <property type="match status" value="1"/>
</dbReference>
<dbReference type="Gene3D" id="3.40.50.1860">
    <property type="match status" value="2"/>
</dbReference>
<dbReference type="HAMAP" id="MF_00258">
    <property type="entry name" value="Glu_racemase"/>
    <property type="match status" value="1"/>
</dbReference>
<dbReference type="InterPro" id="IPR015942">
    <property type="entry name" value="Asp/Glu/hydantoin_racemase"/>
</dbReference>
<dbReference type="InterPro" id="IPR001920">
    <property type="entry name" value="Asp/Glu_race"/>
</dbReference>
<dbReference type="InterPro" id="IPR033134">
    <property type="entry name" value="Asp/Glu_racemase_AS_2"/>
</dbReference>
<dbReference type="InterPro" id="IPR004391">
    <property type="entry name" value="Glu_race"/>
</dbReference>
<dbReference type="NCBIfam" id="TIGR00067">
    <property type="entry name" value="glut_race"/>
    <property type="match status" value="1"/>
</dbReference>
<dbReference type="NCBIfam" id="NF002035">
    <property type="entry name" value="PRK00865.1-3"/>
    <property type="match status" value="1"/>
</dbReference>
<dbReference type="PANTHER" id="PTHR21198">
    <property type="entry name" value="GLUTAMATE RACEMASE"/>
    <property type="match status" value="1"/>
</dbReference>
<dbReference type="PANTHER" id="PTHR21198:SF2">
    <property type="entry name" value="GLUTAMATE RACEMASE"/>
    <property type="match status" value="1"/>
</dbReference>
<dbReference type="Pfam" id="PF01177">
    <property type="entry name" value="Asp_Glu_race"/>
    <property type="match status" value="1"/>
</dbReference>
<dbReference type="SUPFAM" id="SSF53681">
    <property type="entry name" value="Aspartate/glutamate racemase"/>
    <property type="match status" value="2"/>
</dbReference>
<dbReference type="PROSITE" id="PS00924">
    <property type="entry name" value="ASP_GLU_RACEMASE_2"/>
    <property type="match status" value="1"/>
</dbReference>
<keyword id="KW-0133">Cell shape</keyword>
<keyword id="KW-0961">Cell wall biogenesis/degradation</keyword>
<keyword id="KW-0413">Isomerase</keyword>
<keyword id="KW-0573">Peptidoglycan synthesis</keyword>
<gene>
    <name evidence="1" type="primary">murI</name>
    <name type="ordered locus">Spy49_0297</name>
</gene>
<comment type="function">
    <text evidence="1">Provides the (R)-glutamate required for cell wall biosynthesis.</text>
</comment>
<comment type="catalytic activity">
    <reaction evidence="1">
        <text>L-glutamate = D-glutamate</text>
        <dbReference type="Rhea" id="RHEA:12813"/>
        <dbReference type="ChEBI" id="CHEBI:29985"/>
        <dbReference type="ChEBI" id="CHEBI:29986"/>
        <dbReference type="EC" id="5.1.1.3"/>
    </reaction>
</comment>
<comment type="pathway">
    <text evidence="1">Cell wall biogenesis; peptidoglycan biosynthesis.</text>
</comment>
<comment type="similarity">
    <text evidence="1">Belongs to the aspartate/glutamate racemases family.</text>
</comment>
<sequence length="264" mass="29015">MDTRPIGFLDSGVGGLTVVCELIRQLPHEKIVYIGDSARAPYGPRPKKQIKEYTWELVNFLLTQNVKMIVFACNTATAVAWEEVKAALDIPVLGVVLPGASAAIKSTTKGQVGVIGTPMTVASDIYRKKIQLLAPSIQVRSLACPKFVPIVESNEMCSSIAKKIVYDSLAPLVGKIDTLVLGCTHYPLLRPIIQNVMGPSVKLIDSGAECVRDISVLLNYFDINGNYHQKAVKHRFFTTANPEIFQEIASIWLKQKINVEHVTL</sequence>
<reference key="1">
    <citation type="journal article" date="2008" name="J. Bacteriol.">
        <title>Genome sequence of a nephritogenic and highly transformable M49 strain of Streptococcus pyogenes.</title>
        <authorList>
            <person name="McShan W.M."/>
            <person name="Ferretti J.J."/>
            <person name="Karasawa T."/>
            <person name="Suvorov A.N."/>
            <person name="Lin S."/>
            <person name="Qin B."/>
            <person name="Jia H."/>
            <person name="Kenton S."/>
            <person name="Najar F."/>
            <person name="Wu H."/>
            <person name="Scott J."/>
            <person name="Roe B.A."/>
            <person name="Savic D.J."/>
        </authorList>
    </citation>
    <scope>NUCLEOTIDE SEQUENCE [LARGE SCALE GENOMIC DNA]</scope>
    <source>
        <strain>NZ131</strain>
    </source>
</reference>
<protein>
    <recommendedName>
        <fullName evidence="1">Glutamate racemase</fullName>
        <ecNumber evidence="1">5.1.1.3</ecNumber>
    </recommendedName>
</protein>
<proteinExistence type="inferred from homology"/>
<evidence type="ECO:0000255" key="1">
    <source>
        <dbReference type="HAMAP-Rule" id="MF_00258"/>
    </source>
</evidence>
<name>MURI_STRPZ</name>
<feature type="chain" id="PRO_1000114068" description="Glutamate racemase">
    <location>
        <begin position="1"/>
        <end position="264"/>
    </location>
</feature>
<feature type="active site" description="Proton donor/acceptor" evidence="1">
    <location>
        <position position="73"/>
    </location>
</feature>
<feature type="active site" description="Proton donor/acceptor" evidence="1">
    <location>
        <position position="183"/>
    </location>
</feature>
<feature type="binding site" evidence="1">
    <location>
        <begin position="10"/>
        <end position="11"/>
    </location>
    <ligand>
        <name>substrate</name>
    </ligand>
</feature>
<feature type="binding site" evidence="1">
    <location>
        <begin position="42"/>
        <end position="43"/>
    </location>
    <ligand>
        <name>substrate</name>
    </ligand>
</feature>
<feature type="binding site" evidence="1">
    <location>
        <begin position="74"/>
        <end position="75"/>
    </location>
    <ligand>
        <name>substrate</name>
    </ligand>
</feature>
<feature type="binding site" evidence="1">
    <location>
        <begin position="184"/>
        <end position="185"/>
    </location>
    <ligand>
        <name>substrate</name>
    </ligand>
</feature>
<accession>B5XJX3</accession>
<organism>
    <name type="scientific">Streptococcus pyogenes serotype M49 (strain NZ131)</name>
    <dbReference type="NCBI Taxonomy" id="471876"/>
    <lineage>
        <taxon>Bacteria</taxon>
        <taxon>Bacillati</taxon>
        <taxon>Bacillota</taxon>
        <taxon>Bacilli</taxon>
        <taxon>Lactobacillales</taxon>
        <taxon>Streptococcaceae</taxon>
        <taxon>Streptococcus</taxon>
    </lineage>
</organism>